<proteinExistence type="inferred from homology"/>
<geneLocation type="chloroplast"/>
<keyword id="KW-0150">Chloroplast</keyword>
<keyword id="KW-0507">mRNA processing</keyword>
<keyword id="KW-0934">Plastid</keyword>
<keyword id="KW-0694">RNA-binding</keyword>
<keyword id="KW-0819">tRNA processing</keyword>
<accession>Q8MD24</accession>
<name>MATK_HUICH</name>
<dbReference type="EMBL" id="AF503317">
    <property type="protein sequence ID" value="AAM54524.1"/>
    <property type="molecule type" value="Genomic_DNA"/>
</dbReference>
<dbReference type="GO" id="GO:0009507">
    <property type="term" value="C:chloroplast"/>
    <property type="evidence" value="ECO:0007669"/>
    <property type="project" value="UniProtKB-SubCell"/>
</dbReference>
<dbReference type="GO" id="GO:0003723">
    <property type="term" value="F:RNA binding"/>
    <property type="evidence" value="ECO:0007669"/>
    <property type="project" value="UniProtKB-KW"/>
</dbReference>
<dbReference type="GO" id="GO:0006397">
    <property type="term" value="P:mRNA processing"/>
    <property type="evidence" value="ECO:0007669"/>
    <property type="project" value="UniProtKB-KW"/>
</dbReference>
<dbReference type="GO" id="GO:0008380">
    <property type="term" value="P:RNA splicing"/>
    <property type="evidence" value="ECO:0007669"/>
    <property type="project" value="UniProtKB-UniRule"/>
</dbReference>
<dbReference type="GO" id="GO:0008033">
    <property type="term" value="P:tRNA processing"/>
    <property type="evidence" value="ECO:0007669"/>
    <property type="project" value="UniProtKB-KW"/>
</dbReference>
<dbReference type="HAMAP" id="MF_01390">
    <property type="entry name" value="MatK"/>
    <property type="match status" value="1"/>
</dbReference>
<dbReference type="InterPro" id="IPR024937">
    <property type="entry name" value="Domain_X"/>
</dbReference>
<dbReference type="InterPro" id="IPR002866">
    <property type="entry name" value="Maturase_MatK"/>
</dbReference>
<dbReference type="InterPro" id="IPR024942">
    <property type="entry name" value="Maturase_MatK_N"/>
</dbReference>
<dbReference type="PANTHER" id="PTHR34811">
    <property type="entry name" value="MATURASE K"/>
    <property type="match status" value="1"/>
</dbReference>
<dbReference type="PANTHER" id="PTHR34811:SF1">
    <property type="entry name" value="MATURASE K"/>
    <property type="match status" value="1"/>
</dbReference>
<dbReference type="Pfam" id="PF01348">
    <property type="entry name" value="Intron_maturas2"/>
    <property type="match status" value="1"/>
</dbReference>
<dbReference type="Pfam" id="PF01824">
    <property type="entry name" value="MatK_N"/>
    <property type="match status" value="1"/>
</dbReference>
<comment type="function">
    <text evidence="1">Usually encoded in the trnK tRNA gene intron. Probably assists in splicing its own and other chloroplast group II introns.</text>
</comment>
<comment type="subcellular location">
    <subcellularLocation>
        <location>Plastid</location>
        <location>Chloroplast</location>
    </subcellularLocation>
</comment>
<comment type="similarity">
    <text evidence="1">Belongs to the intron maturase 2 family. MatK subfamily.</text>
</comment>
<organism>
    <name type="scientific">Huidobria chilensis</name>
    <name type="common">Loasa chilensis</name>
    <dbReference type="NCBI Taxonomy" id="193478"/>
    <lineage>
        <taxon>Eukaryota</taxon>
        <taxon>Viridiplantae</taxon>
        <taxon>Streptophyta</taxon>
        <taxon>Embryophyta</taxon>
        <taxon>Tracheophyta</taxon>
        <taxon>Spermatophyta</taxon>
        <taxon>Magnoliopsida</taxon>
        <taxon>eudicotyledons</taxon>
        <taxon>Gunneridae</taxon>
        <taxon>Pentapetalae</taxon>
        <taxon>asterids</taxon>
        <taxon>Cornales</taxon>
        <taxon>Loasaceae</taxon>
        <taxon>Huidobria</taxon>
    </lineage>
</organism>
<reference key="1">
    <citation type="journal article" date="2001" name="Am. J. Bot.">
        <title>Phylogenetic relationships of Loasaceae subfamily Gronovioideae inferred from matK and ITS sequence data.</title>
        <authorList>
            <person name="Moody M.L."/>
            <person name="Hufford L."/>
            <person name="Soltis D.E."/>
            <person name="Soltis P.S."/>
        </authorList>
    </citation>
    <scope>NUCLEOTIDE SEQUENCE [GENOMIC DNA]</scope>
</reference>
<feature type="chain" id="PRO_0000143489" description="Maturase K">
    <location>
        <begin position="1"/>
        <end position="508"/>
    </location>
</feature>
<sequence>MEEFQRYFELNRYQQHNFLYPLIFQEYIAALAHDHGLNRSILLENTGYGNKFSLLSVKRLITQMYQQNHLIISANDSSQNQFFGHNKNLYSQMISEGFAVIVEIPFSLRLRSSLEGKEIVKSQNLQSIHSIFPFLEDKFLHLNYVLDILIPYPIHLEILVQTLRHWVKDASSLHLLRFFLHEYRNWNSLITPKKTSSSFSKRNQRLFFFLYNSHVCEYESIFIFILSQSSHLRSTSSGALLERIYFYGKIEHSVEVFAKDFPSILCLLKDPFIHYLRYQGKSILASKGTPLLMNKWKYYLVNSWQCHFYVWSQSRRIYINQLSNHFLDFLGYLSSVRLNPSMVRSQMLENSFLIDNAIKKFETIVPIIPLIGSLAKAKFCNVLGHPISKPVWADLSDSDIIDRFGRICRNLSHYHSGSSKKKSLYRIKYILRLSCARTLARKHKSTVRAFLKMKRVGSELLEKFFTEEEQVFSLTFPRVSSTSTSRGLYRRRIWYLDIICINDLANHE</sequence>
<evidence type="ECO:0000255" key="1">
    <source>
        <dbReference type="HAMAP-Rule" id="MF_01390"/>
    </source>
</evidence>
<gene>
    <name evidence="1" type="primary">matK</name>
</gene>
<protein>
    <recommendedName>
        <fullName evidence="1">Maturase K</fullName>
    </recommendedName>
    <alternativeName>
        <fullName evidence="1">Intron maturase</fullName>
    </alternativeName>
</protein>